<sequence>MSNNIEHTMQFDLSKNKEALTKTILTEVYNSLQEKGYNPINQLVGYLISGDPTYITNYNGARALVRKLERDDILEEVIKSYLEIK</sequence>
<proteinExistence type="inferred from homology"/>
<name>Y1105_CLOB8</name>
<accession>A6LSF7</accession>
<protein>
    <recommendedName>
        <fullName evidence="1">UPF0297 protein Cbei_1105</fullName>
    </recommendedName>
</protein>
<feature type="chain" id="PRO_1000087518" description="UPF0297 protein Cbei_1105">
    <location>
        <begin position="1"/>
        <end position="85"/>
    </location>
</feature>
<organism>
    <name type="scientific">Clostridium beijerinckii (strain ATCC 51743 / NCIMB 8052)</name>
    <name type="common">Clostridium acetobutylicum</name>
    <dbReference type="NCBI Taxonomy" id="290402"/>
    <lineage>
        <taxon>Bacteria</taxon>
        <taxon>Bacillati</taxon>
        <taxon>Bacillota</taxon>
        <taxon>Clostridia</taxon>
        <taxon>Eubacteriales</taxon>
        <taxon>Clostridiaceae</taxon>
        <taxon>Clostridium</taxon>
    </lineage>
</organism>
<reference key="1">
    <citation type="submission" date="2007-06" db="EMBL/GenBank/DDBJ databases">
        <title>Complete sequence of Clostridium beijerinckii NCIMB 8052.</title>
        <authorList>
            <consortium name="US DOE Joint Genome Institute"/>
            <person name="Copeland A."/>
            <person name="Lucas S."/>
            <person name="Lapidus A."/>
            <person name="Barry K."/>
            <person name="Detter J.C."/>
            <person name="Glavina del Rio T."/>
            <person name="Hammon N."/>
            <person name="Israni S."/>
            <person name="Dalin E."/>
            <person name="Tice H."/>
            <person name="Pitluck S."/>
            <person name="Sims D."/>
            <person name="Brettin T."/>
            <person name="Bruce D."/>
            <person name="Tapia R."/>
            <person name="Brainard J."/>
            <person name="Schmutz J."/>
            <person name="Larimer F."/>
            <person name="Land M."/>
            <person name="Hauser L."/>
            <person name="Kyrpides N."/>
            <person name="Mikhailova N."/>
            <person name="Bennet G."/>
            <person name="Cann I."/>
            <person name="Chen J.-S."/>
            <person name="Contreras A.L."/>
            <person name="Jones D."/>
            <person name="Kashket E."/>
            <person name="Mitchell W."/>
            <person name="Stoddard S."/>
            <person name="Schwarz W."/>
            <person name="Qureshi N."/>
            <person name="Young M."/>
            <person name="Shi Z."/>
            <person name="Ezeji T."/>
            <person name="White B."/>
            <person name="Blaschek H."/>
            <person name="Richardson P."/>
        </authorList>
    </citation>
    <scope>NUCLEOTIDE SEQUENCE [LARGE SCALE GENOMIC DNA]</scope>
    <source>
        <strain>ATCC 51743 / NCIMB 8052</strain>
    </source>
</reference>
<dbReference type="EMBL" id="CP000721">
    <property type="protein sequence ID" value="ABR33287.1"/>
    <property type="molecule type" value="Genomic_DNA"/>
</dbReference>
<dbReference type="RefSeq" id="WP_008424959.1">
    <property type="nucleotide sequence ID" value="NC_009617.1"/>
</dbReference>
<dbReference type="SMR" id="A6LSF7"/>
<dbReference type="KEGG" id="cbe:Cbei_1105"/>
<dbReference type="eggNOG" id="COG4472">
    <property type="taxonomic scope" value="Bacteria"/>
</dbReference>
<dbReference type="HOGENOM" id="CLU_162466_0_0_9"/>
<dbReference type="Proteomes" id="UP000000565">
    <property type="component" value="Chromosome"/>
</dbReference>
<dbReference type="HAMAP" id="MF_01507">
    <property type="entry name" value="UPF0297"/>
    <property type="match status" value="1"/>
</dbReference>
<dbReference type="InterPro" id="IPR009309">
    <property type="entry name" value="IreB"/>
</dbReference>
<dbReference type="NCBIfam" id="NF003997">
    <property type="entry name" value="PRK05473.1"/>
    <property type="match status" value="1"/>
</dbReference>
<dbReference type="PANTHER" id="PTHR40067">
    <property type="entry name" value="UPF0297 PROTEIN YRZL"/>
    <property type="match status" value="1"/>
</dbReference>
<dbReference type="PANTHER" id="PTHR40067:SF1">
    <property type="entry name" value="UPF0297 PROTEIN YRZL"/>
    <property type="match status" value="1"/>
</dbReference>
<dbReference type="Pfam" id="PF06135">
    <property type="entry name" value="IreB"/>
    <property type="match status" value="1"/>
</dbReference>
<dbReference type="PIRSF" id="PIRSF037258">
    <property type="entry name" value="DUF965_bac"/>
    <property type="match status" value="1"/>
</dbReference>
<gene>
    <name type="ordered locus">Cbei_1105</name>
</gene>
<evidence type="ECO:0000255" key="1">
    <source>
        <dbReference type="HAMAP-Rule" id="MF_01507"/>
    </source>
</evidence>
<comment type="similarity">
    <text evidence="1">Belongs to the UPF0297 family.</text>
</comment>